<protein>
    <recommendedName>
        <fullName evidence="1">ATP synthase subunit beta</fullName>
        <ecNumber evidence="1">7.1.2.2</ecNumber>
    </recommendedName>
    <alternativeName>
        <fullName evidence="1">ATP synthase F1 sector subunit beta</fullName>
    </alternativeName>
    <alternativeName>
        <fullName evidence="1">F-ATPase subunit beta</fullName>
    </alternativeName>
</protein>
<reference key="1">
    <citation type="journal article" date="2008" name="J. Bacteriol.">
        <title>The genome of Heliobacterium modesticaldum, a phototrophic representative of the Firmicutes containing the simplest photosynthetic apparatus.</title>
        <authorList>
            <person name="Sattley W.M."/>
            <person name="Madigan M.T."/>
            <person name="Swingley W.D."/>
            <person name="Cheung P.C."/>
            <person name="Clocksin K.M."/>
            <person name="Conrad A.L."/>
            <person name="Dejesa L.C."/>
            <person name="Honchak B.M."/>
            <person name="Jung D.O."/>
            <person name="Karbach L.E."/>
            <person name="Kurdoglu A."/>
            <person name="Lahiri S."/>
            <person name="Mastrian S.D."/>
            <person name="Page L.E."/>
            <person name="Taylor H.L."/>
            <person name="Wang Z.T."/>
            <person name="Raymond J."/>
            <person name="Chen M."/>
            <person name="Blankenship R.E."/>
            <person name="Touchman J.W."/>
        </authorList>
    </citation>
    <scope>NUCLEOTIDE SEQUENCE [LARGE SCALE GENOMIC DNA]</scope>
    <source>
        <strain>ATCC 51547 / Ice1</strain>
    </source>
</reference>
<accession>B0THN2</accession>
<keyword id="KW-0066">ATP synthesis</keyword>
<keyword id="KW-0067">ATP-binding</keyword>
<keyword id="KW-1003">Cell membrane</keyword>
<keyword id="KW-0139">CF(1)</keyword>
<keyword id="KW-0375">Hydrogen ion transport</keyword>
<keyword id="KW-0406">Ion transport</keyword>
<keyword id="KW-0472">Membrane</keyword>
<keyword id="KW-0547">Nucleotide-binding</keyword>
<keyword id="KW-1185">Reference proteome</keyword>
<keyword id="KW-1278">Translocase</keyword>
<keyword id="KW-0813">Transport</keyword>
<sequence length="471" mass="51149">MNFGKVIQVIGPVVDIQFPPGQLPEIYNAIKIRSADQENYQGSFEIDITLEAAQHLGNNAVRCVAMSSTDGLMRGMKALDTGAPISVPVGAEILGRMFNVLGDPIDEAGQVAAKEVWPIHRKAPTFENLEPSTEVLETGIKVIDLLAPYAKGGKVGLFGGAGVGKTVLIQELINNIAMEYSGYSVFAGVGERTREGNDLYNEFKESGILKNVAMVFGQMNEPPGARMRVALSGLVMAEYFRDVQNQDVLLFIDNIFRFTQAGSEVSALLGRMPSAVGYQPTLSTEMGQLQERITSTKNGSITSVQAIYVPADDLTDPAPATAFAHLDATTVLSRAIAELGIYPAVDPLDSTSRILDPHVVGDEHYSVARGVQKILQRYKELQDIIAILGMDELSEDDKIVVARARKIQRFLSQPFHVAEAFTGTPGKFVPLKESIRGFKEILEGKHDDLPESAFYMVGTIEEAVAKAKEMA</sequence>
<name>ATPB_HELMI</name>
<comment type="function">
    <text evidence="1">Produces ATP from ADP in the presence of a proton gradient across the membrane. The catalytic sites are hosted primarily by the beta subunits.</text>
</comment>
<comment type="catalytic activity">
    <reaction evidence="1">
        <text>ATP + H2O + 4 H(+)(in) = ADP + phosphate + 5 H(+)(out)</text>
        <dbReference type="Rhea" id="RHEA:57720"/>
        <dbReference type="ChEBI" id="CHEBI:15377"/>
        <dbReference type="ChEBI" id="CHEBI:15378"/>
        <dbReference type="ChEBI" id="CHEBI:30616"/>
        <dbReference type="ChEBI" id="CHEBI:43474"/>
        <dbReference type="ChEBI" id="CHEBI:456216"/>
        <dbReference type="EC" id="7.1.2.2"/>
    </reaction>
</comment>
<comment type="subunit">
    <text evidence="1">F-type ATPases have 2 components, CF(1) - the catalytic core - and CF(0) - the membrane proton channel. CF(1) has five subunits: alpha(3), beta(3), gamma(1), delta(1), epsilon(1). CF(0) has four main subunits: a(1), b(1), b'(1) and c(9-12).</text>
</comment>
<comment type="subcellular location">
    <subcellularLocation>
        <location evidence="1">Cell membrane</location>
        <topology evidence="1">Peripheral membrane protein</topology>
    </subcellularLocation>
</comment>
<comment type="similarity">
    <text evidence="1">Belongs to the ATPase alpha/beta chains family.</text>
</comment>
<organism>
    <name type="scientific">Heliobacterium modesticaldum (strain ATCC 51547 / Ice1)</name>
    <dbReference type="NCBI Taxonomy" id="498761"/>
    <lineage>
        <taxon>Bacteria</taxon>
        <taxon>Bacillati</taxon>
        <taxon>Bacillota</taxon>
        <taxon>Clostridia</taxon>
        <taxon>Eubacteriales</taxon>
        <taxon>Heliobacteriaceae</taxon>
        <taxon>Heliomicrobium</taxon>
    </lineage>
</organism>
<feature type="chain" id="PRO_1000166594" description="ATP synthase subunit beta">
    <location>
        <begin position="1"/>
        <end position="471"/>
    </location>
</feature>
<feature type="binding site" evidence="1">
    <location>
        <begin position="159"/>
        <end position="166"/>
    </location>
    <ligand>
        <name>ATP</name>
        <dbReference type="ChEBI" id="CHEBI:30616"/>
    </ligand>
</feature>
<dbReference type="EC" id="7.1.2.2" evidence="1"/>
<dbReference type="EMBL" id="CP000930">
    <property type="protein sequence ID" value="ABZ83470.1"/>
    <property type="molecule type" value="Genomic_DNA"/>
</dbReference>
<dbReference type="RefSeq" id="WP_012281999.1">
    <property type="nucleotide sequence ID" value="NC_010337.2"/>
</dbReference>
<dbReference type="SMR" id="B0THN2"/>
<dbReference type="STRING" id="498761.HM1_1104"/>
<dbReference type="KEGG" id="hmo:HM1_1104"/>
<dbReference type="eggNOG" id="COG0055">
    <property type="taxonomic scope" value="Bacteria"/>
</dbReference>
<dbReference type="HOGENOM" id="CLU_022398_0_2_9"/>
<dbReference type="OrthoDB" id="9801639at2"/>
<dbReference type="Proteomes" id="UP000008550">
    <property type="component" value="Chromosome"/>
</dbReference>
<dbReference type="GO" id="GO:0005886">
    <property type="term" value="C:plasma membrane"/>
    <property type="evidence" value="ECO:0007669"/>
    <property type="project" value="UniProtKB-SubCell"/>
</dbReference>
<dbReference type="GO" id="GO:0045259">
    <property type="term" value="C:proton-transporting ATP synthase complex"/>
    <property type="evidence" value="ECO:0007669"/>
    <property type="project" value="UniProtKB-KW"/>
</dbReference>
<dbReference type="GO" id="GO:0005524">
    <property type="term" value="F:ATP binding"/>
    <property type="evidence" value="ECO:0007669"/>
    <property type="project" value="UniProtKB-UniRule"/>
</dbReference>
<dbReference type="GO" id="GO:0016887">
    <property type="term" value="F:ATP hydrolysis activity"/>
    <property type="evidence" value="ECO:0007669"/>
    <property type="project" value="InterPro"/>
</dbReference>
<dbReference type="GO" id="GO:0046933">
    <property type="term" value="F:proton-transporting ATP synthase activity, rotational mechanism"/>
    <property type="evidence" value="ECO:0007669"/>
    <property type="project" value="UniProtKB-UniRule"/>
</dbReference>
<dbReference type="CDD" id="cd18110">
    <property type="entry name" value="ATP-synt_F1_beta_C"/>
    <property type="match status" value="1"/>
</dbReference>
<dbReference type="CDD" id="cd18115">
    <property type="entry name" value="ATP-synt_F1_beta_N"/>
    <property type="match status" value="1"/>
</dbReference>
<dbReference type="CDD" id="cd01133">
    <property type="entry name" value="F1-ATPase_beta_CD"/>
    <property type="match status" value="1"/>
</dbReference>
<dbReference type="FunFam" id="1.10.1140.10:FF:000001">
    <property type="entry name" value="ATP synthase subunit beta"/>
    <property type="match status" value="1"/>
</dbReference>
<dbReference type="FunFam" id="2.40.10.170:FF:000005">
    <property type="entry name" value="ATP synthase subunit beta"/>
    <property type="match status" value="1"/>
</dbReference>
<dbReference type="FunFam" id="3.40.50.300:FF:000004">
    <property type="entry name" value="ATP synthase subunit beta"/>
    <property type="match status" value="1"/>
</dbReference>
<dbReference type="Gene3D" id="2.40.10.170">
    <property type="match status" value="1"/>
</dbReference>
<dbReference type="Gene3D" id="1.10.1140.10">
    <property type="entry name" value="Bovine Mitochondrial F1-atpase, Atp Synthase Beta Chain, Chain D, domain 3"/>
    <property type="match status" value="1"/>
</dbReference>
<dbReference type="Gene3D" id="3.40.50.300">
    <property type="entry name" value="P-loop containing nucleotide triphosphate hydrolases"/>
    <property type="match status" value="1"/>
</dbReference>
<dbReference type="HAMAP" id="MF_01347">
    <property type="entry name" value="ATP_synth_beta_bact"/>
    <property type="match status" value="1"/>
</dbReference>
<dbReference type="InterPro" id="IPR003593">
    <property type="entry name" value="AAA+_ATPase"/>
</dbReference>
<dbReference type="InterPro" id="IPR055190">
    <property type="entry name" value="ATP-synt_VA_C"/>
</dbReference>
<dbReference type="InterPro" id="IPR005722">
    <property type="entry name" value="ATP_synth_F1_bsu"/>
</dbReference>
<dbReference type="InterPro" id="IPR020003">
    <property type="entry name" value="ATPase_a/bsu_AS"/>
</dbReference>
<dbReference type="InterPro" id="IPR050053">
    <property type="entry name" value="ATPase_alpha/beta_chains"/>
</dbReference>
<dbReference type="InterPro" id="IPR004100">
    <property type="entry name" value="ATPase_F1/V1/A1_a/bsu_N"/>
</dbReference>
<dbReference type="InterPro" id="IPR036121">
    <property type="entry name" value="ATPase_F1/V1/A1_a/bsu_N_sf"/>
</dbReference>
<dbReference type="InterPro" id="IPR000194">
    <property type="entry name" value="ATPase_F1/V1/A1_a/bsu_nucl-bd"/>
</dbReference>
<dbReference type="InterPro" id="IPR024034">
    <property type="entry name" value="ATPase_F1/V1_b/a_C"/>
</dbReference>
<dbReference type="InterPro" id="IPR027417">
    <property type="entry name" value="P-loop_NTPase"/>
</dbReference>
<dbReference type="NCBIfam" id="TIGR01039">
    <property type="entry name" value="atpD"/>
    <property type="match status" value="1"/>
</dbReference>
<dbReference type="PANTHER" id="PTHR15184">
    <property type="entry name" value="ATP SYNTHASE"/>
    <property type="match status" value="1"/>
</dbReference>
<dbReference type="PANTHER" id="PTHR15184:SF71">
    <property type="entry name" value="ATP SYNTHASE SUBUNIT BETA, MITOCHONDRIAL"/>
    <property type="match status" value="1"/>
</dbReference>
<dbReference type="Pfam" id="PF00006">
    <property type="entry name" value="ATP-synt_ab"/>
    <property type="match status" value="1"/>
</dbReference>
<dbReference type="Pfam" id="PF02874">
    <property type="entry name" value="ATP-synt_ab_N"/>
    <property type="match status" value="1"/>
</dbReference>
<dbReference type="Pfam" id="PF22919">
    <property type="entry name" value="ATP-synt_VA_C"/>
    <property type="match status" value="1"/>
</dbReference>
<dbReference type="PIRSF" id="PIRSF039072">
    <property type="entry name" value="ATPase_subunit_beta"/>
    <property type="match status" value="1"/>
</dbReference>
<dbReference type="SMART" id="SM00382">
    <property type="entry name" value="AAA"/>
    <property type="match status" value="1"/>
</dbReference>
<dbReference type="SUPFAM" id="SSF47917">
    <property type="entry name" value="C-terminal domain of alpha and beta subunits of F1 ATP synthase"/>
    <property type="match status" value="1"/>
</dbReference>
<dbReference type="SUPFAM" id="SSF50615">
    <property type="entry name" value="N-terminal domain of alpha and beta subunits of F1 ATP synthase"/>
    <property type="match status" value="1"/>
</dbReference>
<dbReference type="SUPFAM" id="SSF52540">
    <property type="entry name" value="P-loop containing nucleoside triphosphate hydrolases"/>
    <property type="match status" value="1"/>
</dbReference>
<dbReference type="PROSITE" id="PS00152">
    <property type="entry name" value="ATPASE_ALPHA_BETA"/>
    <property type="match status" value="1"/>
</dbReference>
<proteinExistence type="inferred from homology"/>
<gene>
    <name evidence="1" type="primary">atpD</name>
    <name type="ordered locus">Helmi_08450</name>
    <name type="ORF">HM1_1104</name>
</gene>
<evidence type="ECO:0000255" key="1">
    <source>
        <dbReference type="HAMAP-Rule" id="MF_01347"/>
    </source>
</evidence>